<protein>
    <recommendedName>
        <fullName evidence="12">Protein FAM83A</fullName>
    </recommendedName>
    <alternativeName>
        <fullName evidence="11">Tumor antigen BJ-TSA-9</fullName>
    </alternativeName>
    <alternativeName>
        <fullName evidence="10">Tumor-specific gene expressed in prostate protein</fullName>
    </alternativeName>
</protein>
<sequence>MSRSRHLGKIRKRLEDVKSQWVRPARADFSDNESARLATDALLDGGSEAYWRVLSQEGEVDFLSSVEAQYIQAQAREPPCPPDTLGGAEAGPKGLDSSSLQSGTYFPVASEGSEPALLHSWASAEKPYLKEKSSATVYFQTVKHNNIRDLVRRCITRTSQVLVILMDVFTDVEIFCDILEAANKRGVFVCVLLDQGGVKLFQEMCDKVQISDSHLKNISIRSVEGEIYCAKSGRKFAGQIREKFIISDWRFVLSGSYSFTWLCGHVHRNILSKFTGQAVELFDEEFRHLYASSKPVMGLKSPRLVAPVPPGAAPANGRLSSSSGSASDRTSSNPFSGRSAGSHPGTRSVSASSGPCSPAAPHPPPPPRFQPHQGPWGAPSPQAHLSPRPHDGPPAAVYSNLGAYRPTRLQLEQLGLVPRLTPTWRPFLQASPHF</sequence>
<dbReference type="EMBL" id="DQ280322">
    <property type="protein sequence ID" value="ABB91800.1"/>
    <property type="molecule type" value="mRNA"/>
</dbReference>
<dbReference type="EMBL" id="DQ280323">
    <property type="protein sequence ID" value="ABB91801.1"/>
    <property type="molecule type" value="mRNA"/>
</dbReference>
<dbReference type="EMBL" id="AF497803">
    <property type="protein sequence ID" value="AAQ07260.1"/>
    <property type="molecule type" value="mRNA"/>
</dbReference>
<dbReference type="EMBL" id="BC007828">
    <property type="protein sequence ID" value="AAH07828.1"/>
    <property type="molecule type" value="mRNA"/>
</dbReference>
<dbReference type="EMBL" id="BC052300">
    <property type="protein sequence ID" value="AAH52300.1"/>
    <property type="molecule type" value="mRNA"/>
</dbReference>
<dbReference type="EMBL" id="AK098407">
    <property type="protein sequence ID" value="BAC05299.1"/>
    <property type="status" value="ALT_INIT"/>
    <property type="molecule type" value="mRNA"/>
</dbReference>
<dbReference type="CCDS" id="CCDS6339.1">
    <molecule id="Q86UY5-3"/>
</dbReference>
<dbReference type="CCDS" id="CCDS6340.1">
    <molecule id="Q86UY5-1"/>
</dbReference>
<dbReference type="CCDS" id="CCDS75784.1">
    <molecule id="Q86UY5-2"/>
</dbReference>
<dbReference type="RefSeq" id="NP_001275516.1">
    <molecule id="Q86UY5-2"/>
    <property type="nucleotide sequence ID" value="NM_001288587.3"/>
</dbReference>
<dbReference type="RefSeq" id="NP_001381325.1">
    <molecule id="Q86UY5-1"/>
    <property type="nucleotide sequence ID" value="NM_001394396.1"/>
</dbReference>
<dbReference type="RefSeq" id="NP_116288.2">
    <molecule id="Q86UY5-1"/>
    <property type="nucleotide sequence ID" value="NM_032899.6"/>
</dbReference>
<dbReference type="RefSeq" id="NP_996889.1">
    <molecule id="Q86UY5-3"/>
    <property type="nucleotide sequence ID" value="NM_207006.3"/>
</dbReference>
<dbReference type="RefSeq" id="XP_054217354.1">
    <molecule id="Q86UY5-1"/>
    <property type="nucleotide sequence ID" value="XM_054361379.1"/>
</dbReference>
<dbReference type="PDB" id="4URJ">
    <property type="method" value="X-ray"/>
    <property type="resolution" value="2.68 A"/>
    <property type="chains" value="A/B/C/D=122-304"/>
</dbReference>
<dbReference type="PDBsum" id="4URJ"/>
<dbReference type="SMR" id="Q86UY5"/>
<dbReference type="BioGRID" id="124411">
    <property type="interactions" value="45"/>
</dbReference>
<dbReference type="FunCoup" id="Q86UY5">
    <property type="interactions" value="182"/>
</dbReference>
<dbReference type="IntAct" id="Q86UY5">
    <property type="interactions" value="44"/>
</dbReference>
<dbReference type="STRING" id="9606.ENSP00000428876"/>
<dbReference type="iPTMnet" id="Q86UY5"/>
<dbReference type="PhosphoSitePlus" id="Q86UY5"/>
<dbReference type="BioMuta" id="FAM83A"/>
<dbReference type="DMDM" id="74727505"/>
<dbReference type="jPOST" id="Q86UY5"/>
<dbReference type="MassIVE" id="Q86UY5"/>
<dbReference type="PaxDb" id="9606-ENSP00000428876"/>
<dbReference type="PeptideAtlas" id="Q86UY5"/>
<dbReference type="ProteomicsDB" id="69935">
    <molecule id="Q86UY5-1"/>
</dbReference>
<dbReference type="ProteomicsDB" id="69936">
    <molecule id="Q86UY5-2"/>
</dbReference>
<dbReference type="ProteomicsDB" id="69937">
    <molecule id="Q86UY5-3"/>
</dbReference>
<dbReference type="Pumba" id="Q86UY5"/>
<dbReference type="Antibodypedia" id="64700">
    <property type="antibodies" value="76 antibodies from 18 providers"/>
</dbReference>
<dbReference type="DNASU" id="84985"/>
<dbReference type="Ensembl" id="ENST00000276699.10">
    <molecule id="Q86UY5-3"/>
    <property type="protein sequence ID" value="ENSP00000276699.6"/>
    <property type="gene ID" value="ENSG00000147689.17"/>
</dbReference>
<dbReference type="Ensembl" id="ENST00000518448.5">
    <molecule id="Q86UY5-1"/>
    <property type="protein sequence ID" value="ENSP00000428876.1"/>
    <property type="gene ID" value="ENSG00000147689.17"/>
</dbReference>
<dbReference type="Ensembl" id="ENST00000522648.5">
    <molecule id="Q86UY5-2"/>
    <property type="protein sequence ID" value="ENSP00000427979.1"/>
    <property type="gene ID" value="ENSG00000147689.17"/>
</dbReference>
<dbReference type="Ensembl" id="ENST00000536633.2">
    <molecule id="Q86UY5-3"/>
    <property type="protein sequence ID" value="ENSP00000445218.1"/>
    <property type="gene ID" value="ENSG00000147689.17"/>
</dbReference>
<dbReference type="Ensembl" id="ENST00000690554.1">
    <molecule id="Q86UY5-1"/>
    <property type="protein sequence ID" value="ENSP00000509471.1"/>
    <property type="gene ID" value="ENSG00000147689.17"/>
</dbReference>
<dbReference type="GeneID" id="84985"/>
<dbReference type="KEGG" id="hsa:84985"/>
<dbReference type="MANE-Select" id="ENST00000690554.1">
    <property type="protein sequence ID" value="ENSP00000509471.1"/>
    <property type="RefSeq nucleotide sequence ID" value="NM_001394396.1"/>
    <property type="RefSeq protein sequence ID" value="NP_001381325.1"/>
</dbReference>
<dbReference type="UCSC" id="uc003ypv.5">
    <molecule id="Q86UY5-1"/>
    <property type="organism name" value="human"/>
</dbReference>
<dbReference type="AGR" id="HGNC:28210"/>
<dbReference type="CTD" id="84985"/>
<dbReference type="DisGeNET" id="84985"/>
<dbReference type="GeneCards" id="FAM83A"/>
<dbReference type="HGNC" id="HGNC:28210">
    <property type="gene designation" value="FAM83A"/>
</dbReference>
<dbReference type="HPA" id="ENSG00000147689">
    <property type="expression patterns" value="Group enriched (esophagus, vagina)"/>
</dbReference>
<dbReference type="MIM" id="621022">
    <property type="type" value="gene"/>
</dbReference>
<dbReference type="neXtProt" id="NX_Q86UY5"/>
<dbReference type="OpenTargets" id="ENSG00000147689"/>
<dbReference type="PharmGKB" id="PA142671851"/>
<dbReference type="VEuPathDB" id="HostDB:ENSG00000147689"/>
<dbReference type="eggNOG" id="ENOG502QQDU">
    <property type="taxonomic scope" value="Eukaryota"/>
</dbReference>
<dbReference type="GeneTree" id="ENSGT00940000160768"/>
<dbReference type="HOGENOM" id="CLU_019056_3_1_1"/>
<dbReference type="InParanoid" id="Q86UY5"/>
<dbReference type="OMA" id="YSFSWLC"/>
<dbReference type="OrthoDB" id="9905385at2759"/>
<dbReference type="PAN-GO" id="Q86UY5">
    <property type="GO annotations" value="2 GO annotations based on evolutionary models"/>
</dbReference>
<dbReference type="PhylomeDB" id="Q86UY5"/>
<dbReference type="TreeFam" id="TF330777"/>
<dbReference type="PathwayCommons" id="Q86UY5"/>
<dbReference type="Reactome" id="R-HSA-177929">
    <property type="pathway name" value="Signaling by EGFR"/>
</dbReference>
<dbReference type="SignaLink" id="Q86UY5"/>
<dbReference type="SIGNOR" id="Q86UY5"/>
<dbReference type="BioGRID-ORCS" id="84985">
    <property type="hits" value="17 hits in 1157 CRISPR screens"/>
</dbReference>
<dbReference type="ChiTaRS" id="FAM83A">
    <property type="organism name" value="human"/>
</dbReference>
<dbReference type="EvolutionaryTrace" id="Q86UY5"/>
<dbReference type="GeneWiki" id="FAM83A"/>
<dbReference type="GenomeRNAi" id="84985"/>
<dbReference type="Pharos" id="Q86UY5">
    <property type="development level" value="Tbio"/>
</dbReference>
<dbReference type="PRO" id="PR:Q86UY5"/>
<dbReference type="Proteomes" id="UP000005640">
    <property type="component" value="Chromosome 8"/>
</dbReference>
<dbReference type="RNAct" id="Q86UY5">
    <property type="molecule type" value="protein"/>
</dbReference>
<dbReference type="Bgee" id="ENSG00000147689">
    <property type="expression patterns" value="Expressed in lower esophagus mucosa and 123 other cell types or tissues"/>
</dbReference>
<dbReference type="GO" id="GO:0005737">
    <property type="term" value="C:cytoplasm"/>
    <property type="evidence" value="ECO:0000250"/>
    <property type="project" value="UniProtKB"/>
</dbReference>
<dbReference type="GO" id="GO:0005739">
    <property type="term" value="C:mitochondrion"/>
    <property type="evidence" value="ECO:0000250"/>
    <property type="project" value="UniProtKB"/>
</dbReference>
<dbReference type="GO" id="GO:0042802">
    <property type="term" value="F:identical protein binding"/>
    <property type="evidence" value="ECO:0000353"/>
    <property type="project" value="IntAct"/>
</dbReference>
<dbReference type="GO" id="GO:0036312">
    <property type="term" value="F:phosphatidylinositol 3-kinase regulatory subunit binding"/>
    <property type="evidence" value="ECO:0000314"/>
    <property type="project" value="UniProtKB"/>
</dbReference>
<dbReference type="GO" id="GO:0019901">
    <property type="term" value="F:protein kinase binding"/>
    <property type="evidence" value="ECO:0000314"/>
    <property type="project" value="UniProtKB"/>
</dbReference>
<dbReference type="GO" id="GO:0008283">
    <property type="term" value="P:cell population proliferation"/>
    <property type="evidence" value="ECO:0000315"/>
    <property type="project" value="UniProtKB"/>
</dbReference>
<dbReference type="GO" id="GO:0007173">
    <property type="term" value="P:epidermal growth factor receptor signaling pathway"/>
    <property type="evidence" value="ECO:0000314"/>
    <property type="project" value="UniProtKB"/>
</dbReference>
<dbReference type="GO" id="GO:1904179">
    <property type="term" value="P:positive regulation of adipose tissue development"/>
    <property type="evidence" value="ECO:0000250"/>
    <property type="project" value="UniProtKB"/>
</dbReference>
<dbReference type="GO" id="GO:0050872">
    <property type="term" value="P:white fat cell differentiation"/>
    <property type="evidence" value="ECO:0000250"/>
    <property type="project" value="UniProtKB"/>
</dbReference>
<dbReference type="CDD" id="cd09181">
    <property type="entry name" value="PLDc_FAM83A_N"/>
    <property type="match status" value="1"/>
</dbReference>
<dbReference type="FunFam" id="3.30.870.10:FF:000004">
    <property type="entry name" value="protein FAM83H isoform X2"/>
    <property type="match status" value="1"/>
</dbReference>
<dbReference type="Gene3D" id="3.30.870.10">
    <property type="entry name" value="Endonuclease Chain A"/>
    <property type="match status" value="1"/>
</dbReference>
<dbReference type="InterPro" id="IPR050944">
    <property type="entry name" value="FAM83"/>
</dbReference>
<dbReference type="InterPro" id="IPR012461">
    <property type="entry name" value="SACK1"/>
</dbReference>
<dbReference type="PANTHER" id="PTHR16181">
    <property type="entry name" value="PROTEIN FAM83A-RELATED"/>
    <property type="match status" value="1"/>
</dbReference>
<dbReference type="PANTHER" id="PTHR16181:SF29">
    <property type="entry name" value="PROTEIN FAM83A-RELATED"/>
    <property type="match status" value="1"/>
</dbReference>
<dbReference type="Pfam" id="PF07894">
    <property type="entry name" value="SACK1"/>
    <property type="match status" value="1"/>
</dbReference>
<dbReference type="SUPFAM" id="SSF56024">
    <property type="entry name" value="Phospholipase D/nuclease"/>
    <property type="match status" value="1"/>
</dbReference>
<comment type="function">
    <text evidence="1">Involved in mitochondrial maintenance during adipogenesis. May be acting by playing a role in the maintenance of normal mitochondrial function.</text>
</comment>
<comment type="subunit">
    <text evidence="7">Directly interacts (via DUF1669) with casein kinase isoforms CSNK1A1, CSNK1A1L, CSNK1D and CSNK1E.</text>
</comment>
<comment type="interaction">
    <interactant intactId="EBI-1384254">
        <id>Q86UY5</id>
    </interactant>
    <interactant intactId="EBI-711810">
        <id>O14503</id>
        <label>BHLHE40</label>
    </interactant>
    <organismsDiffer>false</organismsDiffer>
    <experiments>6</experiments>
</comment>
<comment type="interaction">
    <interactant intactId="EBI-1384254">
        <id>Q86UY5</id>
    </interactant>
    <interactant intactId="EBI-749343">
        <id>P49674</id>
        <label>CSNK1E</label>
    </interactant>
    <organismsDiffer>false</organismsDiffer>
    <experiments>5</experiments>
</comment>
<comment type="interaction">
    <interactant intactId="EBI-1384254">
        <id>Q86UY5</id>
    </interactant>
    <interactant intactId="EBI-3867333">
        <id>A8MQ03</id>
        <label>CYSRT1</label>
    </interactant>
    <organismsDiffer>false</organismsDiffer>
    <experiments>3</experiments>
</comment>
<comment type="interaction">
    <interactant intactId="EBI-1384254">
        <id>Q86UY5</id>
    </interactant>
    <interactant intactId="EBI-724310">
        <id>Q15038</id>
        <label>DAZAP2</label>
    </interactant>
    <organismsDiffer>false</organismsDiffer>
    <experiments>3</experiments>
</comment>
<comment type="interaction">
    <interactant intactId="EBI-1384254">
        <id>Q86UY5</id>
    </interactant>
    <interactant intactId="EBI-1384254">
        <id>Q86UY5</id>
        <label>FAM83A</label>
    </interactant>
    <organismsDiffer>false</organismsDiffer>
    <experiments>3</experiments>
</comment>
<comment type="interaction">
    <interactant intactId="EBI-1384254">
        <id>Q86UY5</id>
    </interactant>
    <interactant intactId="EBI-348399">
        <id>P22607</id>
        <label>FGFR3</label>
    </interactant>
    <organismsDiffer>false</organismsDiffer>
    <experiments>3</experiments>
</comment>
<comment type="interaction">
    <interactant intactId="EBI-1384254">
        <id>Q86UY5</id>
    </interactant>
    <interactant intactId="EBI-1759806">
        <id>O75593</id>
        <label>FOXH1</label>
    </interactant>
    <organismsDiffer>false</organismsDiffer>
    <experiments>3</experiments>
</comment>
<comment type="interaction">
    <interactant intactId="EBI-1384254">
        <id>Q86UY5</id>
    </interactant>
    <interactant intactId="EBI-12018822">
        <id>Q12951-2</id>
        <label>FOXI1</label>
    </interactant>
    <organismsDiffer>false</organismsDiffer>
    <experiments>3</experiments>
</comment>
<comment type="interaction">
    <interactant intactId="EBI-1384254">
        <id>Q86UY5</id>
    </interactant>
    <interactant intactId="EBI-746252">
        <id>Q96CN9</id>
        <label>GCC1</label>
    </interactant>
    <organismsDiffer>false</organismsDiffer>
    <experiments>3</experiments>
</comment>
<comment type="interaction">
    <interactant intactId="EBI-1384254">
        <id>Q86UY5</id>
    </interactant>
    <interactant intactId="EBI-10261098">
        <id>Q86YR5-3</id>
        <label>GPSM1</label>
    </interactant>
    <organismsDiffer>false</organismsDiffer>
    <experiments>3</experiments>
</comment>
<comment type="interaction">
    <interactant intactId="EBI-1384254">
        <id>Q86UY5</id>
    </interactant>
    <interactant intactId="EBI-351506">
        <id>P06396</id>
        <label>GSN</label>
    </interactant>
    <organismsDiffer>false</organismsDiffer>
    <experiments>3</experiments>
</comment>
<comment type="interaction">
    <interactant intactId="EBI-1384254">
        <id>Q86UY5</id>
    </interactant>
    <interactant intactId="EBI-1047093">
        <id>O76011</id>
        <label>KRT34</label>
    </interactant>
    <organismsDiffer>false</organismsDiffer>
    <experiments>3</experiments>
</comment>
<comment type="interaction">
    <interactant intactId="EBI-1384254">
        <id>Q86UY5</id>
    </interactant>
    <interactant intactId="EBI-11962084">
        <id>Q3LI66</id>
        <label>KRTAP6-2</label>
    </interactant>
    <organismsDiffer>false</organismsDiffer>
    <experiments>5</experiments>
</comment>
<comment type="interaction">
    <interactant intactId="EBI-1384254">
        <id>Q86UY5</id>
    </interactant>
    <interactant intactId="EBI-22311199">
        <id>Q3LI67</id>
        <label>KRTAP6-3</label>
    </interactant>
    <organismsDiffer>false</organismsDiffer>
    <experiments>3</experiments>
</comment>
<comment type="interaction">
    <interactant intactId="EBI-1384254">
        <id>Q86UY5</id>
    </interactant>
    <interactant intactId="EBI-10261141">
        <id>Q8IUC2</id>
        <label>KRTAP8-1</label>
    </interactant>
    <organismsDiffer>false</organismsDiffer>
    <experiments>3</experiments>
</comment>
<comment type="interaction">
    <interactant intactId="EBI-1384254">
        <id>Q86UY5</id>
    </interactant>
    <interactant intactId="EBI-716006">
        <id>Q9Y5V3</id>
        <label>MAGED1</label>
    </interactant>
    <organismsDiffer>false</organismsDiffer>
    <experiments>3</experiments>
</comment>
<comment type="interaction">
    <interactant intactId="EBI-1384254">
        <id>Q86UY5</id>
    </interactant>
    <interactant intactId="EBI-713635">
        <id>O43639</id>
        <label>NCK2</label>
    </interactant>
    <organismsDiffer>false</organismsDiffer>
    <experiments>3</experiments>
</comment>
<comment type="interaction">
    <interactant intactId="EBI-1384254">
        <id>Q86UY5</id>
    </interactant>
    <interactant intactId="EBI-2876622">
        <id>Q9UPG8</id>
        <label>PLAGL2</label>
    </interactant>
    <organismsDiffer>false</organismsDiffer>
    <experiments>5</experiments>
</comment>
<comment type="interaction">
    <interactant intactId="EBI-1384254">
        <id>Q86UY5</id>
    </interactant>
    <interactant intactId="EBI-50433196">
        <id>A0A6Q8PF08</id>
        <label>PMP22</label>
    </interactant>
    <organismsDiffer>false</organismsDiffer>
    <experiments>3</experiments>
</comment>
<comment type="interaction">
    <interactant intactId="EBI-1384254">
        <id>Q86UY5</id>
    </interactant>
    <interactant intactId="EBI-10293968">
        <id>Q96T49</id>
        <label>PPP1R16B</label>
    </interactant>
    <organismsDiffer>false</organismsDiffer>
    <experiments>3</experiments>
</comment>
<comment type="interaction">
    <interactant intactId="EBI-1384254">
        <id>Q86UY5</id>
    </interactant>
    <interactant intactId="EBI-3957793">
        <id>Q9GZV8</id>
        <label>PRDM14</label>
    </interactant>
    <organismsDiffer>false</organismsDiffer>
    <experiments>3</experiments>
</comment>
<comment type="interaction">
    <interactant intactId="EBI-1384254">
        <id>Q86UY5</id>
    </interactant>
    <interactant intactId="EBI-348380">
        <id>P25788</id>
        <label>PSMA3</label>
    </interactant>
    <organismsDiffer>false</organismsDiffer>
    <experiments>3</experiments>
</comment>
<comment type="interaction">
    <interactant intactId="EBI-1384254">
        <id>Q86UY5</id>
    </interactant>
    <interactant intactId="EBI-347462">
        <id>P47897</id>
        <label>QARS1</label>
    </interactant>
    <organismsDiffer>false</organismsDiffer>
    <experiments>3</experiments>
</comment>
<comment type="interaction">
    <interactant intactId="EBI-1384254">
        <id>Q86UY5</id>
    </interactant>
    <interactant intactId="EBI-8463848">
        <id>Q8NB12</id>
        <label>SMYD1</label>
    </interactant>
    <organismsDiffer>false</organismsDiffer>
    <experiments>3</experiments>
</comment>
<comment type="interaction">
    <interactant intactId="EBI-1384254">
        <id>Q86UY5</id>
    </interactant>
    <interactant intactId="EBI-740098">
        <id>P36406</id>
        <label>TRIM23</label>
    </interactant>
    <organismsDiffer>false</organismsDiffer>
    <experiments>3</experiments>
</comment>
<comment type="interaction">
    <interactant intactId="EBI-1384254">
        <id>Q86UY5</id>
    </interactant>
    <interactant intactId="EBI-719493">
        <id>P14373</id>
        <label>TRIM27</label>
    </interactant>
    <organismsDiffer>false</organismsDiffer>
    <experiments>3</experiments>
</comment>
<comment type="interaction">
    <interactant intactId="EBI-1384254">
        <id>Q86UY5</id>
    </interactant>
    <interactant intactId="EBI-7353612">
        <id>P57075-2</id>
        <label>UBASH3A</label>
    </interactant>
    <organismsDiffer>false</organismsDiffer>
    <experiments>3</experiments>
</comment>
<comment type="interaction">
    <interactant intactId="EBI-1384254">
        <id>Q86UY5</id>
    </interactant>
    <interactant intactId="EBI-741480">
        <id>Q9UMX0</id>
        <label>UBQLN1</label>
    </interactant>
    <organismsDiffer>false</organismsDiffer>
    <experiments>3</experiments>
</comment>
<comment type="interaction">
    <interactant intactId="EBI-1384254">
        <id>Q86UY5</id>
    </interactant>
    <interactant intactId="EBI-25900580">
        <id>Q9Y649</id>
    </interactant>
    <organismsDiffer>false</organismsDiffer>
    <experiments>3</experiments>
</comment>
<comment type="subcellular location">
    <subcellularLocation>
        <location evidence="13">Cytoplasm</location>
    </subcellularLocation>
</comment>
<comment type="alternative products">
    <event type="alternative splicing"/>
    <isoform>
        <id>Q86UY5-1</id>
        <name>1</name>
        <name>TSGP-L</name>
        <sequence type="displayed"/>
    </isoform>
    <isoform>
        <id>Q86UY5-2</id>
        <name>2</name>
        <name>TSGP-S</name>
        <sequence type="described" ref="VSP_025187 VSP_025190 VSP_025191"/>
    </isoform>
    <isoform>
        <id>Q86UY5-3</id>
        <name>3</name>
        <sequence type="described" ref="VSP_025188 VSP_025189"/>
    </isoform>
</comment>
<comment type="domain">
    <text evidence="14">All members of the FAM83 family of proteins share a conserved N-terminal DUF1669 (domain of unknown function 1669) domain of about 300 amino acids. This domain mediates the interaction with casein kinase 1 (CK1) isoforms. Therefore, it has been proposed to rename DUF1669 the polypeptide anchor of CK1 domain.</text>
</comment>
<comment type="PTM">
    <text evidence="5">Phosphorylated upon EGFR activation in a breast cancer cell line.</text>
</comment>
<comment type="disease">
    <text evidence="5 6">FAM83A is considered a proto-oncogene. It is overexpressed in various human tumor types, including breast, lung, testis, ovary and bladder tumors. Elevated expression is associated with elevated tumor grade, decreased overall survival and resistance to several drugs (PubMed:22886303, PubMed:24736947). In cancer cells with FAM83A overexpression, may be important for the activation of RAF1 and phosphoinositide 3-kinase PIK3R1/PIK3R2 regulatory subunit p85, even in the absence of stimulus (PubMed:22886303). In breast cancer cells, interacts with the regulatory subunit p85 of phosphoinositide 3-kinase PIK3R1/PIK3R2; this interaction is increased by EGF treatment (PubMed:22886303). In breast cancer cells, interacts with RAF1; this interaction is increased by EGF treatment and leads to increased RAF1 activation (PubMed:22886303, PubMed:24736947).</text>
</comment>
<comment type="similarity">
    <text evidence="12">Belongs to the FAM83 family.</text>
</comment>
<comment type="sequence caution" evidence="12">
    <conflict type="erroneous initiation">
        <sequence resource="EMBL-CDS" id="BAC05299"/>
    </conflict>
    <text>Truncated N-terminus.</text>
</comment>
<organism>
    <name type="scientific">Homo sapiens</name>
    <name type="common">Human</name>
    <dbReference type="NCBI Taxonomy" id="9606"/>
    <lineage>
        <taxon>Eukaryota</taxon>
        <taxon>Metazoa</taxon>
        <taxon>Chordata</taxon>
        <taxon>Craniata</taxon>
        <taxon>Vertebrata</taxon>
        <taxon>Euteleostomi</taxon>
        <taxon>Mammalia</taxon>
        <taxon>Eutheria</taxon>
        <taxon>Euarchontoglires</taxon>
        <taxon>Primates</taxon>
        <taxon>Haplorrhini</taxon>
        <taxon>Catarrhini</taxon>
        <taxon>Hominidae</taxon>
        <taxon>Homo</taxon>
    </lineage>
</organism>
<reference key="1">
    <citation type="submission" date="2005-11" db="EMBL/GenBank/DDBJ databases">
        <title>TSGP, a shared tumor specific gene expressed in prostate cancer.</title>
        <authorList>
            <person name="Yang D."/>
            <person name="Nelson C.C."/>
            <person name="Li D."/>
            <person name="Gleave M.E."/>
        </authorList>
    </citation>
    <scope>NUCLEOTIDE SEQUENCE [MRNA] (ISOFORMS 1 AND 2)</scope>
</reference>
<reference key="2">
    <citation type="submission" date="2002-04" db="EMBL/GenBank/DDBJ databases">
        <title>BJ-TSA-9, a tumor specific gene which was characterized from lung carcinoma and colon carcinoma.</title>
        <authorList>
            <person name="Xueyuan D."/>
            <person name="Weifeng C."/>
        </authorList>
    </citation>
    <scope>NUCLEOTIDE SEQUENCE [MRNA] (ISOFORM 3)</scope>
    <scope>VARIANT THR-237</scope>
</reference>
<reference key="3">
    <citation type="journal article" date="2004" name="Genome Res.">
        <title>The status, quality, and expansion of the NIH full-length cDNA project: the Mammalian Gene Collection (MGC).</title>
        <authorList>
            <consortium name="The MGC Project Team"/>
        </authorList>
    </citation>
    <scope>NUCLEOTIDE SEQUENCE [LARGE SCALE MRNA] (ISOFORMS 1 AND 2)</scope>
    <scope>VARIANT THR-237</scope>
    <source>
        <tissue>Lung</tissue>
        <tissue>Pancreas</tissue>
    </source>
</reference>
<reference key="4">
    <citation type="journal article" date="2004" name="Nat. Genet.">
        <title>Complete sequencing and characterization of 21,243 full-length human cDNAs.</title>
        <authorList>
            <person name="Ota T."/>
            <person name="Suzuki Y."/>
            <person name="Nishikawa T."/>
            <person name="Otsuki T."/>
            <person name="Sugiyama T."/>
            <person name="Irie R."/>
            <person name="Wakamatsu A."/>
            <person name="Hayashi K."/>
            <person name="Sato H."/>
            <person name="Nagai K."/>
            <person name="Kimura K."/>
            <person name="Makita H."/>
            <person name="Sekine M."/>
            <person name="Obayashi M."/>
            <person name="Nishi T."/>
            <person name="Shibahara T."/>
            <person name="Tanaka T."/>
            <person name="Ishii S."/>
            <person name="Yamamoto J."/>
            <person name="Saito K."/>
            <person name="Kawai Y."/>
            <person name="Isono Y."/>
            <person name="Nakamura Y."/>
            <person name="Nagahari K."/>
            <person name="Murakami K."/>
            <person name="Yasuda T."/>
            <person name="Iwayanagi T."/>
            <person name="Wagatsuma M."/>
            <person name="Shiratori A."/>
            <person name="Sudo H."/>
            <person name="Hosoiri T."/>
            <person name="Kaku Y."/>
            <person name="Kodaira H."/>
            <person name="Kondo H."/>
            <person name="Sugawara M."/>
            <person name="Takahashi M."/>
            <person name="Kanda K."/>
            <person name="Yokoi T."/>
            <person name="Furuya T."/>
            <person name="Kikkawa E."/>
            <person name="Omura Y."/>
            <person name="Abe K."/>
            <person name="Kamihara K."/>
            <person name="Katsuta N."/>
            <person name="Sato K."/>
            <person name="Tanikawa M."/>
            <person name="Yamazaki M."/>
            <person name="Ninomiya K."/>
            <person name="Ishibashi T."/>
            <person name="Yamashita H."/>
            <person name="Murakawa K."/>
            <person name="Fujimori K."/>
            <person name="Tanai H."/>
            <person name="Kimata M."/>
            <person name="Watanabe M."/>
            <person name="Hiraoka S."/>
            <person name="Chiba Y."/>
            <person name="Ishida S."/>
            <person name="Ono Y."/>
            <person name="Takiguchi S."/>
            <person name="Watanabe S."/>
            <person name="Yosida M."/>
            <person name="Hotuta T."/>
            <person name="Kusano J."/>
            <person name="Kanehori K."/>
            <person name="Takahashi-Fujii A."/>
            <person name="Hara H."/>
            <person name="Tanase T.-O."/>
            <person name="Nomura Y."/>
            <person name="Togiya S."/>
            <person name="Komai F."/>
            <person name="Hara R."/>
            <person name="Takeuchi K."/>
            <person name="Arita M."/>
            <person name="Imose N."/>
            <person name="Musashino K."/>
            <person name="Yuuki H."/>
            <person name="Oshima A."/>
            <person name="Sasaki N."/>
            <person name="Aotsuka S."/>
            <person name="Yoshikawa Y."/>
            <person name="Matsunawa H."/>
            <person name="Ichihara T."/>
            <person name="Shiohata N."/>
            <person name="Sano S."/>
            <person name="Moriya S."/>
            <person name="Momiyama H."/>
            <person name="Satoh N."/>
            <person name="Takami S."/>
            <person name="Terashima Y."/>
            <person name="Suzuki O."/>
            <person name="Nakagawa S."/>
            <person name="Senoh A."/>
            <person name="Mizoguchi H."/>
            <person name="Goto Y."/>
            <person name="Shimizu F."/>
            <person name="Wakebe H."/>
            <person name="Hishigaki H."/>
            <person name="Watanabe T."/>
            <person name="Sugiyama A."/>
            <person name="Takemoto M."/>
            <person name="Kawakami B."/>
            <person name="Yamazaki M."/>
            <person name="Watanabe K."/>
            <person name="Kumagai A."/>
            <person name="Itakura S."/>
            <person name="Fukuzumi Y."/>
            <person name="Fujimori Y."/>
            <person name="Komiyama M."/>
            <person name="Tashiro H."/>
            <person name="Tanigami A."/>
            <person name="Fujiwara T."/>
            <person name="Ono T."/>
            <person name="Yamada K."/>
            <person name="Fujii Y."/>
            <person name="Ozaki K."/>
            <person name="Hirao M."/>
            <person name="Ohmori Y."/>
            <person name="Kawabata A."/>
            <person name="Hikiji T."/>
            <person name="Kobatake N."/>
            <person name="Inagaki H."/>
            <person name="Ikema Y."/>
            <person name="Okamoto S."/>
            <person name="Okitani R."/>
            <person name="Kawakami T."/>
            <person name="Noguchi S."/>
            <person name="Itoh T."/>
            <person name="Shigeta K."/>
            <person name="Senba T."/>
            <person name="Matsumura K."/>
            <person name="Nakajima Y."/>
            <person name="Mizuno T."/>
            <person name="Morinaga M."/>
            <person name="Sasaki M."/>
            <person name="Togashi T."/>
            <person name="Oyama M."/>
            <person name="Hata H."/>
            <person name="Watanabe M."/>
            <person name="Komatsu T."/>
            <person name="Mizushima-Sugano J."/>
            <person name="Satoh T."/>
            <person name="Shirai Y."/>
            <person name="Takahashi Y."/>
            <person name="Nakagawa K."/>
            <person name="Okumura K."/>
            <person name="Nagase T."/>
            <person name="Nomura N."/>
            <person name="Kikuchi H."/>
            <person name="Masuho Y."/>
            <person name="Yamashita R."/>
            <person name="Nakai K."/>
            <person name="Yada T."/>
            <person name="Nakamura Y."/>
            <person name="Ohara O."/>
            <person name="Isogai T."/>
            <person name="Sugano S."/>
        </authorList>
    </citation>
    <scope>NUCLEOTIDE SEQUENCE [LARGE SCALE MRNA] OF 134-434 (ISOFORM 1)</scope>
    <scope>VARIANT THR-237</scope>
    <source>
        <tissue>Thyroid</tissue>
    </source>
</reference>
<reference key="5">
    <citation type="journal article" date="2008" name="Proc. Natl. Acad. Sci. U.S.A.">
        <title>A quantitative atlas of mitotic phosphorylation.</title>
        <authorList>
            <person name="Dephoure N."/>
            <person name="Zhou C."/>
            <person name="Villen J."/>
            <person name="Beausoleil S.A."/>
            <person name="Bakalarski C.E."/>
            <person name="Elledge S.J."/>
            <person name="Gygi S.P."/>
        </authorList>
    </citation>
    <scope>PHOSPHORYLATION [LARGE SCALE ANALYSIS] AT SER-348</scope>
    <scope>IDENTIFICATION BY MASS SPECTROMETRY [LARGE SCALE ANALYSIS]</scope>
    <source>
        <tissue>Cervix carcinoma</tissue>
    </source>
</reference>
<reference key="6">
    <citation type="journal article" date="2012" name="J. Clin. Invest.">
        <title>FAM83A confers EGFR-TKI resistance in breast cancer cells and in mice.</title>
        <authorList>
            <person name="Lee S.Y."/>
            <person name="Meier R."/>
            <person name="Furuta S."/>
            <person name="Lenburg M.E."/>
            <person name="Kenny P.A."/>
            <person name="Xu R."/>
            <person name="Bissell M.J."/>
        </authorList>
    </citation>
    <scope>PHOSPHORYLATION</scope>
    <scope>INTERACTION WITH PI3-KINASE AND RAF1</scope>
    <scope>SUBCELLULAR LOCATION</scope>
    <scope>DISEASE</scope>
</reference>
<reference key="7">
    <citation type="journal article" date="2013" name="J. Proteome Res.">
        <title>Toward a comprehensive characterization of a human cancer cell phosphoproteome.</title>
        <authorList>
            <person name="Zhou H."/>
            <person name="Di Palma S."/>
            <person name="Preisinger C."/>
            <person name="Peng M."/>
            <person name="Polat A.N."/>
            <person name="Heck A.J."/>
            <person name="Mohammed S."/>
        </authorList>
    </citation>
    <scope>PHOSPHORYLATION [LARGE SCALE ANALYSIS] AT SER-301; SER-327 AND SER-357</scope>
    <scope>IDENTIFICATION BY MASS SPECTROMETRY [LARGE SCALE ANALYSIS]</scope>
    <source>
        <tissue>Erythroleukemia</tissue>
    </source>
</reference>
<reference key="8">
    <citation type="journal article" date="2014" name="Mol. Cancer Res.">
        <title>Conserved oncogenic behavior of the FAM83 family regulates MAPK signaling in human cancer.</title>
        <authorList>
            <person name="Cipriano R."/>
            <person name="Miskimen K.L."/>
            <person name="Bryson B.L."/>
            <person name="Foy C.R."/>
            <person name="Bartel C.A."/>
            <person name="Jackson M.W."/>
        </authorList>
    </citation>
    <scope>INTERACTION WITH RAF1</scope>
    <scope>DISEASE</scope>
</reference>
<reference key="9">
    <citation type="journal article" date="2018" name="Sci. Signal.">
        <title>The DUF1669 domain of FAM83 family proteins anchor casein kinase 1 isoforms.</title>
        <authorList>
            <person name="Fulcher L.J."/>
            <person name="Bozatzi P."/>
            <person name="Tachie-Menson T."/>
            <person name="Wu K.Z.L."/>
            <person name="Cummins T.D."/>
            <person name="Bufton J.C."/>
            <person name="Pinkas D.M."/>
            <person name="Dunbar K."/>
            <person name="Shrestha S."/>
            <person name="Wood N.T."/>
            <person name="Weidlich S."/>
            <person name="Macartney T.J."/>
            <person name="Varghese J."/>
            <person name="Gourlay R."/>
            <person name="Campbell D.G."/>
            <person name="Dingwell K.S."/>
            <person name="Smith J.C."/>
            <person name="Bullock A.N."/>
            <person name="Sapkota G.P."/>
        </authorList>
    </citation>
    <scope>INTERACTION WITH CSNK1A1; CSNK1A1L; CSNK1D AND CSNK1E</scope>
</reference>
<reference key="10">
    <citation type="submission" date="2014-06" db="PDB data bank">
        <title>Crystal structure of human Bj-Tsa-9.</title>
        <authorList>
            <person name="Pinkas D.M."/>
            <person name="Sanvitale C."/>
            <person name="Wang D."/>
            <person name="Krojer T."/>
            <person name="Kopec J."/>
            <person name="Chaikuad A."/>
            <person name="Dixon Clarke S."/>
            <person name="Berridge G."/>
            <person name="Burgess-Brown N."/>
            <person name="Von Delft F."/>
            <person name="Arrowsmith C."/>
            <person name="Edwards A."/>
            <person name="Bountra C."/>
            <person name="Bullock A."/>
        </authorList>
    </citation>
    <scope>X-RAY CRYSTALLOGRAPHY (2.68 ANGSTROMS) OF 122-304</scope>
</reference>
<name>FA83A_HUMAN</name>
<accession>Q86UY5</accession>
<accession>Q71HL2</accession>
<accession>Q8N7I1</accession>
<accession>Q96I47</accession>
<proteinExistence type="evidence at protein level"/>
<feature type="chain" id="PRO_0000286813" description="Protein FAM83A">
    <location>
        <begin position="1"/>
        <end position="434"/>
    </location>
</feature>
<feature type="region of interest" description="DUF1669" evidence="14">
    <location>
        <begin position="1"/>
        <end position="298"/>
    </location>
</feature>
<feature type="region of interest" description="Disordered" evidence="2">
    <location>
        <begin position="76"/>
        <end position="97"/>
    </location>
</feature>
<feature type="region of interest" description="Disordered" evidence="2">
    <location>
        <begin position="308"/>
        <end position="399"/>
    </location>
</feature>
<feature type="compositionally biased region" description="Low complexity" evidence="2">
    <location>
        <begin position="320"/>
        <end position="332"/>
    </location>
</feature>
<feature type="compositionally biased region" description="Low complexity" evidence="2">
    <location>
        <begin position="348"/>
        <end position="357"/>
    </location>
</feature>
<feature type="compositionally biased region" description="Pro residues" evidence="2">
    <location>
        <begin position="358"/>
        <end position="369"/>
    </location>
</feature>
<feature type="modified residue" description="Phosphoserine" evidence="17">
    <location>
        <position position="301"/>
    </location>
</feature>
<feature type="modified residue" description="Phosphoserine" evidence="17">
    <location>
        <position position="327"/>
    </location>
</feature>
<feature type="modified residue" description="Phosphoserine" evidence="16">
    <location>
        <position position="348"/>
    </location>
</feature>
<feature type="modified residue" description="Phosphoserine" evidence="17">
    <location>
        <position position="357"/>
    </location>
</feature>
<feature type="splice variant" id="VSP_025187" description="In isoform 2." evidence="9 10">
    <location>
        <begin position="161"/>
        <end position="216"/>
    </location>
</feature>
<feature type="splice variant" id="VSP_025188" description="In isoform 3." evidence="11">
    <original>GTRSVSASSGPCSPAAPHPPPPP</original>
    <variation>VPESKQNKTKTKKQTTLWFLMAF</variation>
    <location>
        <begin position="345"/>
        <end position="367"/>
    </location>
</feature>
<feature type="splice variant" id="VSP_025190" description="In isoform 2." evidence="9 10">
    <original>SVS</original>
    <variation>TDG</variation>
    <location>
        <begin position="348"/>
        <end position="350"/>
    </location>
</feature>
<feature type="splice variant" id="VSP_025191" description="In isoform 2." evidence="9 10">
    <location>
        <begin position="351"/>
        <end position="434"/>
    </location>
</feature>
<feature type="splice variant" id="VSP_025189" description="In isoform 3." evidence="11">
    <location>
        <begin position="368"/>
        <end position="434"/>
    </location>
</feature>
<feature type="sequence variant" id="VAR_032178" description="In dbSNP:rs7813708." evidence="3 4 8">
    <original>A</original>
    <variation>T</variation>
    <location>
        <position position="237"/>
    </location>
</feature>
<feature type="helix" evidence="18">
    <location>
        <begin position="128"/>
        <end position="130"/>
    </location>
</feature>
<feature type="strand" evidence="18">
    <location>
        <begin position="135"/>
        <end position="139"/>
    </location>
</feature>
<feature type="strand" evidence="18">
    <location>
        <begin position="142"/>
        <end position="144"/>
    </location>
</feature>
<feature type="helix" evidence="18">
    <location>
        <begin position="146"/>
        <end position="156"/>
    </location>
</feature>
<feature type="strand" evidence="18">
    <location>
        <begin position="160"/>
        <end position="167"/>
    </location>
</feature>
<feature type="helix" evidence="18">
    <location>
        <begin position="172"/>
        <end position="183"/>
    </location>
</feature>
<feature type="strand" evidence="18">
    <location>
        <begin position="188"/>
        <end position="194"/>
    </location>
</feature>
<feature type="helix" evidence="18">
    <location>
        <begin position="195"/>
        <end position="197"/>
    </location>
</feature>
<feature type="helix" evidence="18">
    <location>
        <begin position="198"/>
        <end position="208"/>
    </location>
</feature>
<feature type="helix" evidence="18">
    <location>
        <begin position="213"/>
        <end position="215"/>
    </location>
</feature>
<feature type="strand" evidence="18">
    <location>
        <begin position="216"/>
        <end position="223"/>
    </location>
</feature>
<feature type="strand" evidence="18">
    <location>
        <begin position="227"/>
        <end position="229"/>
    </location>
</feature>
<feature type="strand" evidence="18">
    <location>
        <begin position="235"/>
        <end position="237"/>
    </location>
</feature>
<feature type="strand" evidence="18">
    <location>
        <begin position="244"/>
        <end position="247"/>
    </location>
</feature>
<feature type="turn" evidence="18">
    <location>
        <begin position="248"/>
        <end position="250"/>
    </location>
</feature>
<feature type="strand" evidence="18">
    <location>
        <begin position="251"/>
        <end position="256"/>
    </location>
</feature>
<feature type="turn" evidence="18">
    <location>
        <begin position="261"/>
        <end position="266"/>
    </location>
</feature>
<feature type="strand" evidence="18">
    <location>
        <begin position="270"/>
        <end position="275"/>
    </location>
</feature>
<feature type="helix" evidence="18">
    <location>
        <begin position="278"/>
        <end position="291"/>
    </location>
</feature>
<feature type="strand" evidence="18">
    <location>
        <begin position="294"/>
        <end position="298"/>
    </location>
</feature>
<gene>
    <name evidence="15" type="primary">FAM83A</name>
    <name evidence="10" type="synonym">TSGP</name>
</gene>
<keyword id="KW-0002">3D-structure</keyword>
<keyword id="KW-0025">Alternative splicing</keyword>
<keyword id="KW-0963">Cytoplasm</keyword>
<keyword id="KW-0597">Phosphoprotein</keyword>
<keyword id="KW-1267">Proteomics identification</keyword>
<keyword id="KW-0656">Proto-oncogene</keyword>
<keyword id="KW-1185">Reference proteome</keyword>
<evidence type="ECO:0000250" key="1">
    <source>
        <dbReference type="UniProtKB" id="Q8K2P2"/>
    </source>
</evidence>
<evidence type="ECO:0000256" key="2">
    <source>
        <dbReference type="SAM" id="MobiDB-lite"/>
    </source>
</evidence>
<evidence type="ECO:0000269" key="3">
    <source>
    </source>
</evidence>
<evidence type="ECO:0000269" key="4">
    <source>
    </source>
</evidence>
<evidence type="ECO:0000269" key="5">
    <source>
    </source>
</evidence>
<evidence type="ECO:0000269" key="6">
    <source>
    </source>
</evidence>
<evidence type="ECO:0000269" key="7">
    <source>
    </source>
</evidence>
<evidence type="ECO:0000269" key="8">
    <source ref="2"/>
</evidence>
<evidence type="ECO:0000303" key="9">
    <source>
    </source>
</evidence>
<evidence type="ECO:0000303" key="10">
    <source ref="1"/>
</evidence>
<evidence type="ECO:0000303" key="11">
    <source ref="2"/>
</evidence>
<evidence type="ECO:0000305" key="12"/>
<evidence type="ECO:0000305" key="13">
    <source>
    </source>
</evidence>
<evidence type="ECO:0000305" key="14">
    <source>
    </source>
</evidence>
<evidence type="ECO:0000312" key="15">
    <source>
        <dbReference type="HGNC" id="HGNC:28210"/>
    </source>
</evidence>
<evidence type="ECO:0007744" key="16">
    <source>
    </source>
</evidence>
<evidence type="ECO:0007744" key="17">
    <source>
    </source>
</evidence>
<evidence type="ECO:0007829" key="18">
    <source>
        <dbReference type="PDB" id="4URJ"/>
    </source>
</evidence>